<evidence type="ECO:0000255" key="1">
    <source>
        <dbReference type="HAMAP-Rule" id="MF_01147"/>
    </source>
</evidence>
<protein>
    <recommendedName>
        <fullName evidence="1">Phosphatidylglycerol--prolipoprotein diacylglyceryl transferase</fullName>
        <ecNumber evidence="1">2.5.1.145</ecNumber>
    </recommendedName>
</protein>
<reference key="1">
    <citation type="submission" date="2007-06" db="EMBL/GenBank/DDBJ databases">
        <title>Complete sequence of Sinorhizobium medicae WSM419 chromosome.</title>
        <authorList>
            <consortium name="US DOE Joint Genome Institute"/>
            <person name="Copeland A."/>
            <person name="Lucas S."/>
            <person name="Lapidus A."/>
            <person name="Barry K."/>
            <person name="Glavina del Rio T."/>
            <person name="Dalin E."/>
            <person name="Tice H."/>
            <person name="Pitluck S."/>
            <person name="Chain P."/>
            <person name="Malfatti S."/>
            <person name="Shin M."/>
            <person name="Vergez L."/>
            <person name="Schmutz J."/>
            <person name="Larimer F."/>
            <person name="Land M."/>
            <person name="Hauser L."/>
            <person name="Kyrpides N."/>
            <person name="Mikhailova N."/>
            <person name="Reeve W.G."/>
            <person name="Richardson P."/>
        </authorList>
    </citation>
    <scope>NUCLEOTIDE SEQUENCE [LARGE SCALE GENOMIC DNA]</scope>
    <source>
        <strain>WSM419</strain>
    </source>
</reference>
<accession>A6UBQ4</accession>
<name>LGT_SINMW</name>
<gene>
    <name evidence="1" type="primary">lgt</name>
    <name type="ordered locus">Smed_2252</name>
</gene>
<sequence>METIATRLAILPFPEIDPVIFTIGPLAVRWYGLAYVVGILLGWFYARRIVQNAALWRNGTPACNLTQLDDFLLWAAGGIVLGGRIGYILFYDLGSILDDPLRAIQIWNGGMSFHGGLVGTTLAMIIFARRNAIPIWSLFDVVAAVVPIGLFFGRIANFINGELWGRLSSVPWAVVFPTGGPFARHPSQLYEAALEGLVLLAVLAWFVYRRKALKIPGLVTGIFVCGYAASRIFVEFFREPDAQIGYLAGDWLTMGMVLSVPMALIGIWAIARARSAAAAA</sequence>
<comment type="function">
    <text evidence="1">Catalyzes the transfer of the diacylglyceryl group from phosphatidylglycerol to the sulfhydryl group of the N-terminal cysteine of a prolipoprotein, the first step in the formation of mature lipoproteins.</text>
</comment>
<comment type="catalytic activity">
    <reaction evidence="1">
        <text>L-cysteinyl-[prolipoprotein] + a 1,2-diacyl-sn-glycero-3-phospho-(1'-sn-glycerol) = an S-1,2-diacyl-sn-glyceryl-L-cysteinyl-[prolipoprotein] + sn-glycerol 1-phosphate + H(+)</text>
        <dbReference type="Rhea" id="RHEA:56712"/>
        <dbReference type="Rhea" id="RHEA-COMP:14679"/>
        <dbReference type="Rhea" id="RHEA-COMP:14680"/>
        <dbReference type="ChEBI" id="CHEBI:15378"/>
        <dbReference type="ChEBI" id="CHEBI:29950"/>
        <dbReference type="ChEBI" id="CHEBI:57685"/>
        <dbReference type="ChEBI" id="CHEBI:64716"/>
        <dbReference type="ChEBI" id="CHEBI:140658"/>
        <dbReference type="EC" id="2.5.1.145"/>
    </reaction>
</comment>
<comment type="pathway">
    <text evidence="1">Protein modification; lipoprotein biosynthesis (diacylglyceryl transfer).</text>
</comment>
<comment type="subcellular location">
    <subcellularLocation>
        <location evidence="1">Cell inner membrane</location>
        <topology evidence="1">Multi-pass membrane protein</topology>
    </subcellularLocation>
</comment>
<comment type="similarity">
    <text evidence="1">Belongs to the Lgt family.</text>
</comment>
<feature type="chain" id="PRO_1000053500" description="Phosphatidylglycerol--prolipoprotein diacylglyceryl transferase">
    <location>
        <begin position="1"/>
        <end position="280"/>
    </location>
</feature>
<feature type="transmembrane region" description="Helical" evidence="1">
    <location>
        <begin position="30"/>
        <end position="50"/>
    </location>
</feature>
<feature type="transmembrane region" description="Helical" evidence="1">
    <location>
        <begin position="71"/>
        <end position="91"/>
    </location>
</feature>
<feature type="transmembrane region" description="Helical" evidence="1">
    <location>
        <begin position="106"/>
        <end position="126"/>
    </location>
</feature>
<feature type="transmembrane region" description="Helical" evidence="1">
    <location>
        <begin position="132"/>
        <end position="152"/>
    </location>
</feature>
<feature type="transmembrane region" description="Helical" evidence="1">
    <location>
        <begin position="188"/>
        <end position="208"/>
    </location>
</feature>
<feature type="transmembrane region" description="Helical" evidence="1">
    <location>
        <begin position="217"/>
        <end position="237"/>
    </location>
</feature>
<feature type="transmembrane region" description="Helical" evidence="1">
    <location>
        <begin position="251"/>
        <end position="271"/>
    </location>
</feature>
<feature type="binding site" evidence="1">
    <location>
        <position position="154"/>
    </location>
    <ligand>
        <name>a 1,2-diacyl-sn-glycero-3-phospho-(1'-sn-glycerol)</name>
        <dbReference type="ChEBI" id="CHEBI:64716"/>
    </ligand>
</feature>
<keyword id="KW-0997">Cell inner membrane</keyword>
<keyword id="KW-1003">Cell membrane</keyword>
<keyword id="KW-0472">Membrane</keyword>
<keyword id="KW-0808">Transferase</keyword>
<keyword id="KW-0812">Transmembrane</keyword>
<keyword id="KW-1133">Transmembrane helix</keyword>
<dbReference type="EC" id="2.5.1.145" evidence="1"/>
<dbReference type="EMBL" id="CP000738">
    <property type="protein sequence ID" value="ABR61084.1"/>
    <property type="molecule type" value="Genomic_DNA"/>
</dbReference>
<dbReference type="RefSeq" id="WP_011976379.1">
    <property type="nucleotide sequence ID" value="NC_009636.1"/>
</dbReference>
<dbReference type="RefSeq" id="YP_001327919.1">
    <property type="nucleotide sequence ID" value="NC_009636.1"/>
</dbReference>
<dbReference type="SMR" id="A6UBQ4"/>
<dbReference type="STRING" id="366394.Smed_2252"/>
<dbReference type="GeneID" id="61611508"/>
<dbReference type="KEGG" id="smd:Smed_2252"/>
<dbReference type="PATRIC" id="fig|366394.8.peg.5424"/>
<dbReference type="eggNOG" id="COG0682">
    <property type="taxonomic scope" value="Bacteria"/>
</dbReference>
<dbReference type="HOGENOM" id="CLU_013386_1_0_5"/>
<dbReference type="OrthoDB" id="871140at2"/>
<dbReference type="UniPathway" id="UPA00664"/>
<dbReference type="Proteomes" id="UP000001108">
    <property type="component" value="Chromosome"/>
</dbReference>
<dbReference type="GO" id="GO:0005886">
    <property type="term" value="C:plasma membrane"/>
    <property type="evidence" value="ECO:0007669"/>
    <property type="project" value="UniProtKB-SubCell"/>
</dbReference>
<dbReference type="GO" id="GO:0008961">
    <property type="term" value="F:phosphatidylglycerol-prolipoprotein diacylglyceryl transferase activity"/>
    <property type="evidence" value="ECO:0007669"/>
    <property type="project" value="UniProtKB-UniRule"/>
</dbReference>
<dbReference type="GO" id="GO:0042158">
    <property type="term" value="P:lipoprotein biosynthetic process"/>
    <property type="evidence" value="ECO:0007669"/>
    <property type="project" value="UniProtKB-UniRule"/>
</dbReference>
<dbReference type="HAMAP" id="MF_01147">
    <property type="entry name" value="Lgt"/>
    <property type="match status" value="1"/>
</dbReference>
<dbReference type="InterPro" id="IPR001640">
    <property type="entry name" value="Lgt"/>
</dbReference>
<dbReference type="NCBIfam" id="TIGR00544">
    <property type="entry name" value="lgt"/>
    <property type="match status" value="1"/>
</dbReference>
<dbReference type="PANTHER" id="PTHR30589:SF0">
    <property type="entry name" value="PHOSPHATIDYLGLYCEROL--PROLIPOPROTEIN DIACYLGLYCERYL TRANSFERASE"/>
    <property type="match status" value="1"/>
</dbReference>
<dbReference type="PANTHER" id="PTHR30589">
    <property type="entry name" value="PROLIPOPROTEIN DIACYLGLYCERYL TRANSFERASE"/>
    <property type="match status" value="1"/>
</dbReference>
<dbReference type="Pfam" id="PF01790">
    <property type="entry name" value="LGT"/>
    <property type="match status" value="1"/>
</dbReference>
<dbReference type="PROSITE" id="PS01311">
    <property type="entry name" value="LGT"/>
    <property type="match status" value="1"/>
</dbReference>
<proteinExistence type="inferred from homology"/>
<organism>
    <name type="scientific">Sinorhizobium medicae (strain WSM419)</name>
    <name type="common">Ensifer medicae</name>
    <dbReference type="NCBI Taxonomy" id="366394"/>
    <lineage>
        <taxon>Bacteria</taxon>
        <taxon>Pseudomonadati</taxon>
        <taxon>Pseudomonadota</taxon>
        <taxon>Alphaproteobacteria</taxon>
        <taxon>Hyphomicrobiales</taxon>
        <taxon>Rhizobiaceae</taxon>
        <taxon>Sinorhizobium/Ensifer group</taxon>
        <taxon>Sinorhizobium</taxon>
    </lineage>
</organism>